<gene>
    <name type="primary">Lrrc36</name>
</gene>
<organism>
    <name type="scientific">Mus musculus</name>
    <name type="common">Mouse</name>
    <dbReference type="NCBI Taxonomy" id="10090"/>
    <lineage>
        <taxon>Eukaryota</taxon>
        <taxon>Metazoa</taxon>
        <taxon>Chordata</taxon>
        <taxon>Craniata</taxon>
        <taxon>Vertebrata</taxon>
        <taxon>Euteleostomi</taxon>
        <taxon>Mammalia</taxon>
        <taxon>Eutheria</taxon>
        <taxon>Euarchontoglires</taxon>
        <taxon>Glires</taxon>
        <taxon>Rodentia</taxon>
        <taxon>Myomorpha</taxon>
        <taxon>Muroidea</taxon>
        <taxon>Muridae</taxon>
        <taxon>Murinae</taxon>
        <taxon>Mus</taxon>
        <taxon>Mus</taxon>
    </lineage>
</organism>
<reference key="1">
    <citation type="journal article" date="2005" name="Science">
        <title>The transcriptional landscape of the mammalian genome.</title>
        <authorList>
            <person name="Carninci P."/>
            <person name="Kasukawa T."/>
            <person name="Katayama S."/>
            <person name="Gough J."/>
            <person name="Frith M.C."/>
            <person name="Maeda N."/>
            <person name="Oyama R."/>
            <person name="Ravasi T."/>
            <person name="Lenhard B."/>
            <person name="Wells C."/>
            <person name="Kodzius R."/>
            <person name="Shimokawa K."/>
            <person name="Bajic V.B."/>
            <person name="Brenner S.E."/>
            <person name="Batalov S."/>
            <person name="Forrest A.R."/>
            <person name="Zavolan M."/>
            <person name="Davis M.J."/>
            <person name="Wilming L.G."/>
            <person name="Aidinis V."/>
            <person name="Allen J.E."/>
            <person name="Ambesi-Impiombato A."/>
            <person name="Apweiler R."/>
            <person name="Aturaliya R.N."/>
            <person name="Bailey T.L."/>
            <person name="Bansal M."/>
            <person name="Baxter L."/>
            <person name="Beisel K.W."/>
            <person name="Bersano T."/>
            <person name="Bono H."/>
            <person name="Chalk A.M."/>
            <person name="Chiu K.P."/>
            <person name="Choudhary V."/>
            <person name="Christoffels A."/>
            <person name="Clutterbuck D.R."/>
            <person name="Crowe M.L."/>
            <person name="Dalla E."/>
            <person name="Dalrymple B.P."/>
            <person name="de Bono B."/>
            <person name="Della Gatta G."/>
            <person name="di Bernardo D."/>
            <person name="Down T."/>
            <person name="Engstrom P."/>
            <person name="Fagiolini M."/>
            <person name="Faulkner G."/>
            <person name="Fletcher C.F."/>
            <person name="Fukushima T."/>
            <person name="Furuno M."/>
            <person name="Futaki S."/>
            <person name="Gariboldi M."/>
            <person name="Georgii-Hemming P."/>
            <person name="Gingeras T.R."/>
            <person name="Gojobori T."/>
            <person name="Green R.E."/>
            <person name="Gustincich S."/>
            <person name="Harbers M."/>
            <person name="Hayashi Y."/>
            <person name="Hensch T.K."/>
            <person name="Hirokawa N."/>
            <person name="Hill D."/>
            <person name="Huminiecki L."/>
            <person name="Iacono M."/>
            <person name="Ikeo K."/>
            <person name="Iwama A."/>
            <person name="Ishikawa T."/>
            <person name="Jakt M."/>
            <person name="Kanapin A."/>
            <person name="Katoh M."/>
            <person name="Kawasawa Y."/>
            <person name="Kelso J."/>
            <person name="Kitamura H."/>
            <person name="Kitano H."/>
            <person name="Kollias G."/>
            <person name="Krishnan S.P."/>
            <person name="Kruger A."/>
            <person name="Kummerfeld S.K."/>
            <person name="Kurochkin I.V."/>
            <person name="Lareau L.F."/>
            <person name="Lazarevic D."/>
            <person name="Lipovich L."/>
            <person name="Liu J."/>
            <person name="Liuni S."/>
            <person name="McWilliam S."/>
            <person name="Madan Babu M."/>
            <person name="Madera M."/>
            <person name="Marchionni L."/>
            <person name="Matsuda H."/>
            <person name="Matsuzawa S."/>
            <person name="Miki H."/>
            <person name="Mignone F."/>
            <person name="Miyake S."/>
            <person name="Morris K."/>
            <person name="Mottagui-Tabar S."/>
            <person name="Mulder N."/>
            <person name="Nakano N."/>
            <person name="Nakauchi H."/>
            <person name="Ng P."/>
            <person name="Nilsson R."/>
            <person name="Nishiguchi S."/>
            <person name="Nishikawa S."/>
            <person name="Nori F."/>
            <person name="Ohara O."/>
            <person name="Okazaki Y."/>
            <person name="Orlando V."/>
            <person name="Pang K.C."/>
            <person name="Pavan W.J."/>
            <person name="Pavesi G."/>
            <person name="Pesole G."/>
            <person name="Petrovsky N."/>
            <person name="Piazza S."/>
            <person name="Reed J."/>
            <person name="Reid J.F."/>
            <person name="Ring B.Z."/>
            <person name="Ringwald M."/>
            <person name="Rost B."/>
            <person name="Ruan Y."/>
            <person name="Salzberg S.L."/>
            <person name="Sandelin A."/>
            <person name="Schneider C."/>
            <person name="Schoenbach C."/>
            <person name="Sekiguchi K."/>
            <person name="Semple C.A."/>
            <person name="Seno S."/>
            <person name="Sessa L."/>
            <person name="Sheng Y."/>
            <person name="Shibata Y."/>
            <person name="Shimada H."/>
            <person name="Shimada K."/>
            <person name="Silva D."/>
            <person name="Sinclair B."/>
            <person name="Sperling S."/>
            <person name="Stupka E."/>
            <person name="Sugiura K."/>
            <person name="Sultana R."/>
            <person name="Takenaka Y."/>
            <person name="Taki K."/>
            <person name="Tammoja K."/>
            <person name="Tan S.L."/>
            <person name="Tang S."/>
            <person name="Taylor M.S."/>
            <person name="Tegner J."/>
            <person name="Teichmann S.A."/>
            <person name="Ueda H.R."/>
            <person name="van Nimwegen E."/>
            <person name="Verardo R."/>
            <person name="Wei C.L."/>
            <person name="Yagi K."/>
            <person name="Yamanishi H."/>
            <person name="Zabarovsky E."/>
            <person name="Zhu S."/>
            <person name="Zimmer A."/>
            <person name="Hide W."/>
            <person name="Bult C."/>
            <person name="Grimmond S.M."/>
            <person name="Teasdale R.D."/>
            <person name="Liu E.T."/>
            <person name="Brusic V."/>
            <person name="Quackenbush J."/>
            <person name="Wahlestedt C."/>
            <person name="Mattick J.S."/>
            <person name="Hume D.A."/>
            <person name="Kai C."/>
            <person name="Sasaki D."/>
            <person name="Tomaru Y."/>
            <person name="Fukuda S."/>
            <person name="Kanamori-Katayama M."/>
            <person name="Suzuki M."/>
            <person name="Aoki J."/>
            <person name="Arakawa T."/>
            <person name="Iida J."/>
            <person name="Imamura K."/>
            <person name="Itoh M."/>
            <person name="Kato T."/>
            <person name="Kawaji H."/>
            <person name="Kawagashira N."/>
            <person name="Kawashima T."/>
            <person name="Kojima M."/>
            <person name="Kondo S."/>
            <person name="Konno H."/>
            <person name="Nakano K."/>
            <person name="Ninomiya N."/>
            <person name="Nishio T."/>
            <person name="Okada M."/>
            <person name="Plessy C."/>
            <person name="Shibata K."/>
            <person name="Shiraki T."/>
            <person name="Suzuki S."/>
            <person name="Tagami M."/>
            <person name="Waki K."/>
            <person name="Watahiki A."/>
            <person name="Okamura-Oho Y."/>
            <person name="Suzuki H."/>
            <person name="Kawai J."/>
            <person name="Hayashizaki Y."/>
        </authorList>
    </citation>
    <scope>NUCLEOTIDE SEQUENCE [LARGE SCALE MRNA] (ISOFORM 2)</scope>
    <source>
        <strain>C57BL/6J</strain>
        <tissue>Testis</tissue>
    </source>
</reference>
<reference key="2">
    <citation type="journal article" date="2009" name="PLoS Biol.">
        <title>Lineage-specific biology revealed by a finished genome assembly of the mouse.</title>
        <authorList>
            <person name="Church D.M."/>
            <person name="Goodstadt L."/>
            <person name="Hillier L.W."/>
            <person name="Zody M.C."/>
            <person name="Goldstein S."/>
            <person name="She X."/>
            <person name="Bult C.J."/>
            <person name="Agarwala R."/>
            <person name="Cherry J.L."/>
            <person name="DiCuccio M."/>
            <person name="Hlavina W."/>
            <person name="Kapustin Y."/>
            <person name="Meric P."/>
            <person name="Maglott D."/>
            <person name="Birtle Z."/>
            <person name="Marques A.C."/>
            <person name="Graves T."/>
            <person name="Zhou S."/>
            <person name="Teague B."/>
            <person name="Potamousis K."/>
            <person name="Churas C."/>
            <person name="Place M."/>
            <person name="Herschleb J."/>
            <person name="Runnheim R."/>
            <person name="Forrest D."/>
            <person name="Amos-Landgraf J."/>
            <person name="Schwartz D.C."/>
            <person name="Cheng Z."/>
            <person name="Lindblad-Toh K."/>
            <person name="Eichler E.E."/>
            <person name="Ponting C.P."/>
        </authorList>
    </citation>
    <scope>NUCLEOTIDE SEQUENCE [LARGE SCALE GENOMIC DNA]</scope>
    <source>
        <strain>C57BL/6J</strain>
    </source>
</reference>
<reference key="3">
    <citation type="journal article" date="2004" name="Genome Res.">
        <title>The status, quality, and expansion of the NIH full-length cDNA project: the Mammalian Gene Collection (MGC).</title>
        <authorList>
            <consortium name="The MGC Project Team"/>
        </authorList>
    </citation>
    <scope>NUCLEOTIDE SEQUENCE [LARGE SCALE MRNA] (ISOFORM 2)</scope>
    <source>
        <tissue>Testis</tissue>
    </source>
</reference>
<reference key="4">
    <citation type="journal article" date="2010" name="Cell">
        <title>A tissue-specific atlas of mouse protein phosphorylation and expression.</title>
        <authorList>
            <person name="Huttlin E.L."/>
            <person name="Jedrychowski M.P."/>
            <person name="Elias J.E."/>
            <person name="Goswami T."/>
            <person name="Rad R."/>
            <person name="Beausoleil S.A."/>
            <person name="Villen J."/>
            <person name="Haas W."/>
            <person name="Sowa M.E."/>
            <person name="Gygi S.P."/>
        </authorList>
    </citation>
    <scope>IDENTIFICATION BY MASS SPECTROMETRY [LARGE SCALE ANALYSIS]</scope>
    <source>
        <tissue>Testis</tissue>
    </source>
</reference>
<proteinExistence type="evidence at protein level"/>
<evidence type="ECO:0000255" key="1"/>
<evidence type="ECO:0000256" key="2">
    <source>
        <dbReference type="SAM" id="MobiDB-lite"/>
    </source>
</evidence>
<evidence type="ECO:0000303" key="3">
    <source>
    </source>
</evidence>
<evidence type="ECO:0000303" key="4">
    <source>
    </source>
</evidence>
<keyword id="KW-0025">Alternative splicing</keyword>
<keyword id="KW-0175">Coiled coil</keyword>
<keyword id="KW-0433">Leucine-rich repeat</keyword>
<keyword id="KW-1185">Reference proteome</keyword>
<keyword id="KW-0677">Repeat</keyword>
<sequence length="755" mass="83763">MAEQWDLDEECLRRLGALTLEQPELVESLSLQGSYAGKIHSIGDAFRNFKSLRSLDLSRNLITSLKGIQYLCSLQELNLYYNNIPSLVEVSRLQPLPFLKELDLRLNPVVRKDTDYRLFAVYTLQTLEKLDDRAVRDSERRAAKLHFSQLGNSENFLLEVEKSSREKTMKNCVTDEGPASHVSPEVDARMETDANKGLFIPFPNREIKDSLTSICAAQGSGTPAQKLDVFPLGTQMQEATRRETSDLHQEDELRLYPPPQSTVRSPEKMTRDGYRVSFLDTKSSGSSPEKDLIPKPDAYPCTHDASLGKRLDVGDSNQILPCQLPSEVCLDHYGNQYSQTLCLHGSLVKRAQKGKNYREHSIKPSQDKKATTSHPCGDLLTSLSNPDSSTGRLLRLSSDLYATTHFNSDPALLANVEQQLSSLRDFTPAPGSFPSSPALGNSLRTLLLPPGTPENREIPTKRSLSPSRRGFKRKDGILANPSLKRGFQDATGSEAQPLSSDLGSLHGLSGNHSPPISARTPHVATVLRQLLELVDKHWNGSGSLLLDKKFLGPARDLLLSLVVPAPSQQWRRSKLDDKAGKALCWRETELKEAGLLVPNDVESLKQKLVKVLEENLVLSEKIQQLEGTAATSIVSGHPSHTHDELLRKNQQLTIQVACLTQELTQLKRLEETVALLHESQRSLVVTNEYLLQQLHKEQKGYSGKSLLPPEKSHPLGRSSPFGKSTLSSSSPMVHDTGQYLIQSVSEADPEPSLWS</sequence>
<name>LRC36_MOUSE</name>
<comment type="alternative products">
    <event type="alternative splicing"/>
    <isoform>
        <id>Q3V0M2-1</id>
        <name>1</name>
        <sequence type="displayed"/>
    </isoform>
    <isoform>
        <id>Q3V0M2-2</id>
        <name>2</name>
        <sequence type="described" ref="VSP_022965 VSP_022966"/>
    </isoform>
</comment>
<protein>
    <recommendedName>
        <fullName>Leucine-rich repeat-containing protein 36</fullName>
    </recommendedName>
</protein>
<accession>Q3V0M2</accession>
<accession>B2RX53</accession>
<dbReference type="EMBL" id="AC090480">
    <property type="status" value="NOT_ANNOTATED_CDS"/>
    <property type="molecule type" value="Genomic_DNA"/>
</dbReference>
<dbReference type="EMBL" id="AK133042">
    <property type="protein sequence ID" value="BAE21482.1"/>
    <property type="molecule type" value="mRNA"/>
</dbReference>
<dbReference type="EMBL" id="BC150957">
    <property type="protein sequence ID" value="AAI50958.1"/>
    <property type="molecule type" value="mRNA"/>
</dbReference>
<dbReference type="CCDS" id="CCDS22601.1">
    <molecule id="Q3V0M2-2"/>
</dbReference>
<dbReference type="RefSeq" id="NP_001028543.1">
    <molecule id="Q3V0M2-2"/>
    <property type="nucleotide sequence ID" value="NM_001033371.3"/>
</dbReference>
<dbReference type="RefSeq" id="NP_001164260.1">
    <property type="nucleotide sequence ID" value="NM_001170789.1"/>
</dbReference>
<dbReference type="RefSeq" id="XP_006531118.1">
    <molecule id="Q3V0M2-1"/>
    <property type="nucleotide sequence ID" value="XM_006531055.3"/>
</dbReference>
<dbReference type="SMR" id="Q3V0M2"/>
<dbReference type="FunCoup" id="Q3V0M2">
    <property type="interactions" value="1"/>
</dbReference>
<dbReference type="STRING" id="10090.ENSMUSP00000104979"/>
<dbReference type="iPTMnet" id="Q3V0M2"/>
<dbReference type="PhosphoSitePlus" id="Q3V0M2"/>
<dbReference type="PaxDb" id="10090-ENSMUSP00000066345"/>
<dbReference type="ProteomicsDB" id="290150">
    <molecule id="Q3V0M2-1"/>
</dbReference>
<dbReference type="ProteomicsDB" id="290151">
    <molecule id="Q3V0M2-2"/>
</dbReference>
<dbReference type="Antibodypedia" id="56057">
    <property type="antibodies" value="81 antibodies from 13 providers"/>
</dbReference>
<dbReference type="Ensembl" id="ENSMUST00000067305.8">
    <molecule id="Q3V0M2-2"/>
    <property type="protein sequence ID" value="ENSMUSP00000066345.7"/>
    <property type="gene ID" value="ENSMUSG00000054320.17"/>
</dbReference>
<dbReference type="Ensembl" id="ENSMUST00000213547.2">
    <molecule id="Q3V0M2-1"/>
    <property type="protein sequence ID" value="ENSMUSP00000150103.2"/>
    <property type="gene ID" value="ENSMUSG00000054320.17"/>
</dbReference>
<dbReference type="GeneID" id="270091"/>
<dbReference type="KEGG" id="mmu:270091"/>
<dbReference type="UCSC" id="uc009nda.2">
    <molecule id="Q3V0M2-2"/>
    <property type="organism name" value="mouse"/>
</dbReference>
<dbReference type="AGR" id="MGI:2448585"/>
<dbReference type="CTD" id="55282"/>
<dbReference type="MGI" id="MGI:2448585">
    <property type="gene designation" value="Lrrc36"/>
</dbReference>
<dbReference type="VEuPathDB" id="HostDB:ENSMUSG00000054320"/>
<dbReference type="eggNOG" id="ENOG502S998">
    <property type="taxonomic scope" value="Eukaryota"/>
</dbReference>
<dbReference type="GeneTree" id="ENSGT00530000063884"/>
<dbReference type="InParanoid" id="Q3V0M2"/>
<dbReference type="OrthoDB" id="676979at2759"/>
<dbReference type="PhylomeDB" id="Q3V0M2"/>
<dbReference type="TreeFam" id="TF338646"/>
<dbReference type="BioGRID-ORCS" id="270091">
    <property type="hits" value="0 hits in 77 CRISPR screens"/>
</dbReference>
<dbReference type="ChiTaRS" id="Lrrc36">
    <property type="organism name" value="mouse"/>
</dbReference>
<dbReference type="PRO" id="PR:Q3V0M2"/>
<dbReference type="Proteomes" id="UP000000589">
    <property type="component" value="Chromosome 8"/>
</dbReference>
<dbReference type="RNAct" id="Q3V0M2">
    <property type="molecule type" value="protein"/>
</dbReference>
<dbReference type="Bgee" id="ENSMUSG00000054320">
    <property type="expression patterns" value="Expressed in seminiferous tubule of testis and 47 other cell types or tissues"/>
</dbReference>
<dbReference type="ExpressionAtlas" id="Q3V0M2">
    <property type="expression patterns" value="baseline and differential"/>
</dbReference>
<dbReference type="Gene3D" id="3.80.10.10">
    <property type="entry name" value="Ribonuclease Inhibitor"/>
    <property type="match status" value="1"/>
</dbReference>
<dbReference type="InterPro" id="IPR055320">
    <property type="entry name" value="CEP72-like"/>
</dbReference>
<dbReference type="InterPro" id="IPR001611">
    <property type="entry name" value="Leu-rich_rpt"/>
</dbReference>
<dbReference type="InterPro" id="IPR032675">
    <property type="entry name" value="LRR_dom_sf"/>
</dbReference>
<dbReference type="PANTHER" id="PTHR23311">
    <property type="entry name" value="HEAT SHOCK REGULATED 2"/>
    <property type="match status" value="1"/>
</dbReference>
<dbReference type="PANTHER" id="PTHR23311:SF6">
    <property type="entry name" value="LEUCINE-RICH REPEAT-CONTAINING PROTEIN 36"/>
    <property type="match status" value="1"/>
</dbReference>
<dbReference type="Pfam" id="PF14580">
    <property type="entry name" value="LRR_9"/>
    <property type="match status" value="1"/>
</dbReference>
<dbReference type="SUPFAM" id="SSF52058">
    <property type="entry name" value="L domain-like"/>
    <property type="match status" value="1"/>
</dbReference>
<dbReference type="PROSITE" id="PS51450">
    <property type="entry name" value="LRR"/>
    <property type="match status" value="2"/>
</dbReference>
<feature type="chain" id="PRO_0000275856" description="Leucine-rich repeat-containing protein 36">
    <location>
        <begin position="1"/>
        <end position="755"/>
    </location>
</feature>
<feature type="repeat" description="LRR 1">
    <location>
        <begin position="51"/>
        <end position="72"/>
    </location>
</feature>
<feature type="repeat" description="LRR 2">
    <location>
        <begin position="73"/>
        <end position="94"/>
    </location>
</feature>
<feature type="domain" description="LRRCT">
    <location>
        <begin position="107"/>
        <end position="146"/>
    </location>
</feature>
<feature type="region of interest" description="Disordered" evidence="2">
    <location>
        <begin position="354"/>
        <end position="374"/>
    </location>
</feature>
<feature type="region of interest" description="Disordered" evidence="2">
    <location>
        <begin position="448"/>
        <end position="517"/>
    </location>
</feature>
<feature type="region of interest" description="Disordered" evidence="2">
    <location>
        <begin position="701"/>
        <end position="755"/>
    </location>
</feature>
<feature type="coiled-coil region" evidence="1">
    <location>
        <begin position="601"/>
        <end position="671"/>
    </location>
</feature>
<feature type="compositionally biased region" description="Basic and acidic residues" evidence="2">
    <location>
        <begin position="356"/>
        <end position="370"/>
    </location>
</feature>
<feature type="compositionally biased region" description="Low complexity" evidence="2">
    <location>
        <begin position="498"/>
        <end position="510"/>
    </location>
</feature>
<feature type="compositionally biased region" description="Polar residues" evidence="2">
    <location>
        <begin position="721"/>
        <end position="731"/>
    </location>
</feature>
<feature type="splice variant" id="VSP_022965" description="In isoform 2." evidence="3 4">
    <location>
        <begin position="1"/>
        <end position="121"/>
    </location>
</feature>
<feature type="splice variant" id="VSP_022966" description="In isoform 2." evidence="3 4">
    <original>YTLQTLEKL</original>
    <variation>MLTPWLSPP</variation>
    <location>
        <begin position="122"/>
        <end position="130"/>
    </location>
</feature>